<name>PYRE_KLULA</name>
<sequence length="226" mass="24815">MPTALEDYQKNFLELAIESKALRFGEFTLKSGRVSPYFFNLGLFNTGKLLSNLATAYAIAIIQSELKFDVIFGPAYKGIPLASIVCVKLAEIGGSKFQDVKYAFNRKEAKDHGEGGNIVGAALKDQKILIIDDVMTAGTAINEAFEIIAKEEGKVVGSIIALDRQEVVNTEDTEVLSATQSVSKRYDIPVLSIVNLSNIISYLDGRISVEEREKMEQYRQTYGASA</sequence>
<feature type="chain" id="PRO_0000110797" description="Orotate phosphoribosyltransferase">
    <location>
        <begin position="1"/>
        <end position="226"/>
    </location>
</feature>
<feature type="binding site" description="in other chain" evidence="1">
    <location>
        <position position="30"/>
    </location>
    <ligand>
        <name>5-phospho-alpha-D-ribose 1-diphosphate</name>
        <dbReference type="ChEBI" id="CHEBI:58017"/>
        <note>ligand shared between dimeric partners</note>
    </ligand>
</feature>
<feature type="binding site" evidence="1">
    <location>
        <begin position="38"/>
        <end position="39"/>
    </location>
    <ligand>
        <name>orotate</name>
        <dbReference type="ChEBI" id="CHEBI:30839"/>
    </ligand>
</feature>
<feature type="binding site" description="in other chain" evidence="1">
    <location>
        <begin position="76"/>
        <end position="77"/>
    </location>
    <ligand>
        <name>5-phospho-alpha-D-ribose 1-diphosphate</name>
        <dbReference type="ChEBI" id="CHEBI:58017"/>
        <note>ligand shared between dimeric partners</note>
    </ligand>
</feature>
<feature type="binding site" evidence="1">
    <location>
        <position position="106"/>
    </location>
    <ligand>
        <name>5-phospho-alpha-D-ribose 1-diphosphate</name>
        <dbReference type="ChEBI" id="CHEBI:58017"/>
        <note>ligand shared between dimeric partners</note>
    </ligand>
</feature>
<feature type="binding site" description="in other chain" evidence="1">
    <location>
        <position position="107"/>
    </location>
    <ligand>
        <name>5-phospho-alpha-D-ribose 1-diphosphate</name>
        <dbReference type="ChEBI" id="CHEBI:58017"/>
        <note>ligand shared between dimeric partners</note>
    </ligand>
</feature>
<feature type="binding site" evidence="1">
    <location>
        <position position="110"/>
    </location>
    <ligand>
        <name>5-phospho-alpha-D-ribose 1-diphosphate</name>
        <dbReference type="ChEBI" id="CHEBI:58017"/>
        <note>ligand shared between dimeric partners</note>
    </ligand>
</feature>
<feature type="binding site" evidence="1">
    <location>
        <position position="112"/>
    </location>
    <ligand>
        <name>5-phospho-alpha-D-ribose 1-diphosphate</name>
        <dbReference type="ChEBI" id="CHEBI:58017"/>
        <note>ligand shared between dimeric partners</note>
    </ligand>
</feature>
<feature type="binding site" description="in other chain" evidence="1">
    <location>
        <begin position="132"/>
        <end position="140"/>
    </location>
    <ligand>
        <name>5-phospho-alpha-D-ribose 1-diphosphate</name>
        <dbReference type="ChEBI" id="CHEBI:58017"/>
        <note>ligand shared between dimeric partners</note>
    </ligand>
</feature>
<feature type="binding site" evidence="1">
    <location>
        <position position="136"/>
    </location>
    <ligand>
        <name>orotate</name>
        <dbReference type="ChEBI" id="CHEBI:30839"/>
    </ligand>
</feature>
<feature type="binding site" evidence="1">
    <location>
        <position position="164"/>
    </location>
    <ligand>
        <name>orotate</name>
        <dbReference type="ChEBI" id="CHEBI:30839"/>
    </ligand>
</feature>
<gene>
    <name type="primary">URA5</name>
    <name type="ordered locus">KLLA0D01903g</name>
</gene>
<proteinExistence type="inferred from homology"/>
<dbReference type="EC" id="2.4.2.10"/>
<dbReference type="EMBL" id="AJ001358">
    <property type="protein sequence ID" value="CAA04694.1"/>
    <property type="molecule type" value="Genomic_DNA"/>
</dbReference>
<dbReference type="EMBL" id="CR382124">
    <property type="protein sequence ID" value="CAH00248.1"/>
    <property type="molecule type" value="Genomic_DNA"/>
</dbReference>
<dbReference type="RefSeq" id="XP_453152.1">
    <property type="nucleotide sequence ID" value="XM_453152.1"/>
</dbReference>
<dbReference type="SMR" id="O13474"/>
<dbReference type="FunCoup" id="O13474">
    <property type="interactions" value="229"/>
</dbReference>
<dbReference type="STRING" id="284590.O13474"/>
<dbReference type="PaxDb" id="284590-O13474"/>
<dbReference type="KEGG" id="kla:KLLA0_D01903g"/>
<dbReference type="eggNOG" id="KOG1377">
    <property type="taxonomic scope" value="Eukaryota"/>
</dbReference>
<dbReference type="HOGENOM" id="CLU_074878_0_1_1"/>
<dbReference type="InParanoid" id="O13474"/>
<dbReference type="OMA" id="SPFFMNA"/>
<dbReference type="UniPathway" id="UPA00070">
    <property type="reaction ID" value="UER00119"/>
</dbReference>
<dbReference type="Proteomes" id="UP000000598">
    <property type="component" value="Chromosome D"/>
</dbReference>
<dbReference type="GO" id="GO:0005737">
    <property type="term" value="C:cytoplasm"/>
    <property type="evidence" value="ECO:0007669"/>
    <property type="project" value="TreeGrafter"/>
</dbReference>
<dbReference type="GO" id="GO:0004588">
    <property type="term" value="F:orotate phosphoribosyltransferase activity"/>
    <property type="evidence" value="ECO:0007669"/>
    <property type="project" value="UniProtKB-EC"/>
</dbReference>
<dbReference type="GO" id="GO:0006207">
    <property type="term" value="P:'de novo' pyrimidine nucleobase biosynthetic process"/>
    <property type="evidence" value="ECO:0007669"/>
    <property type="project" value="TreeGrafter"/>
</dbReference>
<dbReference type="GO" id="GO:0044205">
    <property type="term" value="P:'de novo' UMP biosynthetic process"/>
    <property type="evidence" value="ECO:0007669"/>
    <property type="project" value="UniProtKB-UniPathway"/>
</dbReference>
<dbReference type="GO" id="GO:0046132">
    <property type="term" value="P:pyrimidine ribonucleoside biosynthetic process"/>
    <property type="evidence" value="ECO:0007669"/>
    <property type="project" value="TreeGrafter"/>
</dbReference>
<dbReference type="CDD" id="cd06223">
    <property type="entry name" value="PRTases_typeI"/>
    <property type="match status" value="1"/>
</dbReference>
<dbReference type="FunFam" id="3.40.50.2020:FF:000008">
    <property type="entry name" value="Orotate phosphoribosyltransferase"/>
    <property type="match status" value="1"/>
</dbReference>
<dbReference type="Gene3D" id="3.40.50.2020">
    <property type="match status" value="1"/>
</dbReference>
<dbReference type="HAMAP" id="MF_01208">
    <property type="entry name" value="PyrE"/>
    <property type="match status" value="1"/>
</dbReference>
<dbReference type="InterPro" id="IPR023031">
    <property type="entry name" value="OPRT"/>
</dbReference>
<dbReference type="InterPro" id="IPR004467">
    <property type="entry name" value="Or_phspho_trans_dom"/>
</dbReference>
<dbReference type="InterPro" id="IPR000836">
    <property type="entry name" value="PRibTrfase_dom"/>
</dbReference>
<dbReference type="InterPro" id="IPR029057">
    <property type="entry name" value="PRTase-like"/>
</dbReference>
<dbReference type="NCBIfam" id="TIGR00336">
    <property type="entry name" value="pyrE"/>
    <property type="match status" value="1"/>
</dbReference>
<dbReference type="PANTHER" id="PTHR46683">
    <property type="entry name" value="OROTATE PHOSPHORIBOSYLTRANSFERASE 1-RELATED"/>
    <property type="match status" value="1"/>
</dbReference>
<dbReference type="PANTHER" id="PTHR46683:SF1">
    <property type="entry name" value="OROTATE PHOSPHORIBOSYLTRANSFERASE 1-RELATED"/>
    <property type="match status" value="1"/>
</dbReference>
<dbReference type="Pfam" id="PF00156">
    <property type="entry name" value="Pribosyltran"/>
    <property type="match status" value="1"/>
</dbReference>
<dbReference type="SUPFAM" id="SSF53271">
    <property type="entry name" value="PRTase-like"/>
    <property type="match status" value="1"/>
</dbReference>
<dbReference type="PROSITE" id="PS00103">
    <property type="entry name" value="PUR_PYR_PR_TRANSFER"/>
    <property type="match status" value="1"/>
</dbReference>
<accession>O13474</accession>
<protein>
    <recommendedName>
        <fullName>Orotate phosphoribosyltransferase</fullName>
        <shortName>OPRT</shortName>
        <shortName>OPRTase</shortName>
        <ecNumber>2.4.2.10</ecNumber>
    </recommendedName>
</protein>
<evidence type="ECO:0000250" key="1"/>
<evidence type="ECO:0000305" key="2"/>
<keyword id="KW-0328">Glycosyltransferase</keyword>
<keyword id="KW-0665">Pyrimidine biosynthesis</keyword>
<keyword id="KW-1185">Reference proteome</keyword>
<keyword id="KW-0808">Transferase</keyword>
<organism>
    <name type="scientific">Kluyveromyces lactis (strain ATCC 8585 / CBS 2359 / DSM 70799 / NBRC 1267 / NRRL Y-1140 / WM37)</name>
    <name type="common">Yeast</name>
    <name type="synonym">Candida sphaerica</name>
    <dbReference type="NCBI Taxonomy" id="284590"/>
    <lineage>
        <taxon>Eukaryota</taxon>
        <taxon>Fungi</taxon>
        <taxon>Dikarya</taxon>
        <taxon>Ascomycota</taxon>
        <taxon>Saccharomycotina</taxon>
        <taxon>Saccharomycetes</taxon>
        <taxon>Saccharomycetales</taxon>
        <taxon>Saccharomycetaceae</taxon>
        <taxon>Kluyveromyces</taxon>
    </lineage>
</organism>
<comment type="function">
    <text evidence="1">Catalyzes the transfer of a ribosyl phosphate group from 5-phosphoribose 1-diphosphate to orotate, leading to the formation of orotidine monophosphate (OMP).</text>
</comment>
<comment type="catalytic activity">
    <reaction>
        <text>orotidine 5'-phosphate + diphosphate = orotate + 5-phospho-alpha-D-ribose 1-diphosphate</text>
        <dbReference type="Rhea" id="RHEA:10380"/>
        <dbReference type="ChEBI" id="CHEBI:30839"/>
        <dbReference type="ChEBI" id="CHEBI:33019"/>
        <dbReference type="ChEBI" id="CHEBI:57538"/>
        <dbReference type="ChEBI" id="CHEBI:58017"/>
        <dbReference type="EC" id="2.4.2.10"/>
    </reaction>
</comment>
<comment type="pathway">
    <text>Pyrimidine metabolism; UMP biosynthesis via de novo pathway; UMP from orotate: step 1/2.</text>
</comment>
<comment type="subunit">
    <text evidence="1">Homodimer.</text>
</comment>
<comment type="similarity">
    <text evidence="2">Belongs to the purine/pyrimidine phosphoribosyltransferase family. PyrE subfamily.</text>
</comment>
<reference key="1">
    <citation type="journal article" date="1999" name="Yeast">
        <title>The URA5 gene encoding orotate-phosphoribosyl transferase of the yeast Kluyveromyces lactis: cloning, sequencing and use as a selectable marker.</title>
        <authorList>
            <person name="Bai X."/>
            <person name="Larsen M."/>
            <person name="Meinhardt F."/>
        </authorList>
    </citation>
    <scope>NUCLEOTIDE SEQUENCE [GENOMIC DNA]</scope>
    <source>
        <strain>ATCC 56498 / CBS 683 / DSM 4394 / NBRC 1090 / NRRL Y-8279</strain>
    </source>
</reference>
<reference key="2">
    <citation type="journal article" date="2004" name="Nature">
        <title>Genome evolution in yeasts.</title>
        <authorList>
            <person name="Dujon B."/>
            <person name="Sherman D."/>
            <person name="Fischer G."/>
            <person name="Durrens P."/>
            <person name="Casaregola S."/>
            <person name="Lafontaine I."/>
            <person name="de Montigny J."/>
            <person name="Marck C."/>
            <person name="Neuveglise C."/>
            <person name="Talla E."/>
            <person name="Goffard N."/>
            <person name="Frangeul L."/>
            <person name="Aigle M."/>
            <person name="Anthouard V."/>
            <person name="Babour A."/>
            <person name="Barbe V."/>
            <person name="Barnay S."/>
            <person name="Blanchin S."/>
            <person name="Beckerich J.-M."/>
            <person name="Beyne E."/>
            <person name="Bleykasten C."/>
            <person name="Boisrame A."/>
            <person name="Boyer J."/>
            <person name="Cattolico L."/>
            <person name="Confanioleri F."/>
            <person name="de Daruvar A."/>
            <person name="Despons L."/>
            <person name="Fabre E."/>
            <person name="Fairhead C."/>
            <person name="Ferry-Dumazet H."/>
            <person name="Groppi A."/>
            <person name="Hantraye F."/>
            <person name="Hennequin C."/>
            <person name="Jauniaux N."/>
            <person name="Joyet P."/>
            <person name="Kachouri R."/>
            <person name="Kerrest A."/>
            <person name="Koszul R."/>
            <person name="Lemaire M."/>
            <person name="Lesur I."/>
            <person name="Ma L."/>
            <person name="Muller H."/>
            <person name="Nicaud J.-M."/>
            <person name="Nikolski M."/>
            <person name="Oztas S."/>
            <person name="Ozier-Kalogeropoulos O."/>
            <person name="Pellenz S."/>
            <person name="Potier S."/>
            <person name="Richard G.-F."/>
            <person name="Straub M.-L."/>
            <person name="Suleau A."/>
            <person name="Swennen D."/>
            <person name="Tekaia F."/>
            <person name="Wesolowski-Louvel M."/>
            <person name="Westhof E."/>
            <person name="Wirth B."/>
            <person name="Zeniou-Meyer M."/>
            <person name="Zivanovic Y."/>
            <person name="Bolotin-Fukuhara M."/>
            <person name="Thierry A."/>
            <person name="Bouchier C."/>
            <person name="Caudron B."/>
            <person name="Scarpelli C."/>
            <person name="Gaillardin C."/>
            <person name="Weissenbach J."/>
            <person name="Wincker P."/>
            <person name="Souciet J.-L."/>
        </authorList>
    </citation>
    <scope>NUCLEOTIDE SEQUENCE [LARGE SCALE GENOMIC DNA]</scope>
    <source>
        <strain>ATCC 8585 / CBS 2359 / DSM 70799 / NBRC 1267 / NRRL Y-1140 / WM37</strain>
    </source>
</reference>